<feature type="chain" id="PRO_0000080928" description="Rho guanine nucleotide exchange factor 11">
    <location>
        <begin position="1"/>
        <end position="1522"/>
    </location>
</feature>
<feature type="domain" description="PDZ" evidence="5">
    <location>
        <begin position="47"/>
        <end position="126"/>
    </location>
</feature>
<feature type="domain" description="RGSL" evidence="7">
    <location>
        <begin position="306"/>
        <end position="486"/>
    </location>
</feature>
<feature type="domain" description="DH" evidence="4">
    <location>
        <begin position="734"/>
        <end position="923"/>
    </location>
</feature>
<feature type="domain" description="PH" evidence="6">
    <location>
        <begin position="965"/>
        <end position="1079"/>
    </location>
</feature>
<feature type="region of interest" description="Disordered" evidence="8">
    <location>
        <begin position="1"/>
        <end position="40"/>
    </location>
</feature>
<feature type="region of interest" description="Disordered" evidence="8">
    <location>
        <begin position="128"/>
        <end position="175"/>
    </location>
</feature>
<feature type="region of interest" description="Disordered" evidence="8">
    <location>
        <begin position="200"/>
        <end position="231"/>
    </location>
</feature>
<feature type="region of interest" description="Disordered" evidence="8">
    <location>
        <begin position="263"/>
        <end position="286"/>
    </location>
</feature>
<feature type="region of interest" description="Disordered" evidence="8">
    <location>
        <begin position="490"/>
        <end position="555"/>
    </location>
</feature>
<feature type="region of interest" description="Disordered" evidence="8">
    <location>
        <begin position="573"/>
        <end position="680"/>
    </location>
</feature>
<feature type="region of interest" description="Disordered" evidence="8">
    <location>
        <begin position="1084"/>
        <end position="1141"/>
    </location>
</feature>
<feature type="region of interest" description="Disordered" evidence="8">
    <location>
        <begin position="1223"/>
        <end position="1320"/>
    </location>
</feature>
<feature type="region of interest" description="Disordered" evidence="8">
    <location>
        <begin position="1332"/>
        <end position="1423"/>
    </location>
</feature>
<feature type="region of interest" description="Disordered" evidence="8">
    <location>
        <begin position="1453"/>
        <end position="1522"/>
    </location>
</feature>
<feature type="coiled-coil region" evidence="3">
    <location>
        <begin position="444"/>
        <end position="470"/>
    </location>
</feature>
<feature type="compositionally biased region" description="Pro residues" evidence="8">
    <location>
        <begin position="149"/>
        <end position="161"/>
    </location>
</feature>
<feature type="compositionally biased region" description="Basic and acidic residues" evidence="8">
    <location>
        <begin position="521"/>
        <end position="533"/>
    </location>
</feature>
<feature type="compositionally biased region" description="Basic and acidic residues" evidence="8">
    <location>
        <begin position="601"/>
        <end position="637"/>
    </location>
</feature>
<feature type="compositionally biased region" description="Low complexity" evidence="8">
    <location>
        <begin position="651"/>
        <end position="664"/>
    </location>
</feature>
<feature type="compositionally biased region" description="Pro residues" evidence="8">
    <location>
        <begin position="1091"/>
        <end position="1100"/>
    </location>
</feature>
<feature type="compositionally biased region" description="Basic and acidic residues" evidence="8">
    <location>
        <begin position="1112"/>
        <end position="1124"/>
    </location>
</feature>
<feature type="compositionally biased region" description="Polar residues" evidence="8">
    <location>
        <begin position="1236"/>
        <end position="1245"/>
    </location>
</feature>
<feature type="compositionally biased region" description="Low complexity" evidence="8">
    <location>
        <begin position="1338"/>
        <end position="1353"/>
    </location>
</feature>
<feature type="compositionally biased region" description="Acidic residues" evidence="8">
    <location>
        <begin position="1503"/>
        <end position="1513"/>
    </location>
</feature>
<feature type="modified residue" description="Phosphoserine" evidence="25">
    <location>
        <position position="2"/>
    </location>
</feature>
<feature type="modified residue" description="Phosphoserine" evidence="2">
    <location>
        <position position="14"/>
    </location>
</feature>
<feature type="modified residue" description="Phosphoserine" evidence="25">
    <location>
        <position position="16"/>
    </location>
</feature>
<feature type="modified residue" description="Phosphoserine" evidence="25">
    <location>
        <position position="35"/>
    </location>
</feature>
<feature type="modified residue" description="Phosphoserine" evidence="21 23">
    <location>
        <position position="245"/>
    </location>
</feature>
<feature type="modified residue" description="Phosphoserine" evidence="21 24">
    <location>
        <position position="251"/>
    </location>
</feature>
<feature type="modified residue" description="Phosphothreonine" evidence="21">
    <location>
        <position position="254"/>
    </location>
</feature>
<feature type="modified residue" description="Phosphoserine" evidence="2">
    <location>
        <position position="255"/>
    </location>
</feature>
<feature type="modified residue" description="Phosphoserine" evidence="2">
    <location>
        <position position="271"/>
    </location>
</feature>
<feature type="modified residue" description="Phosphoserine" evidence="25">
    <location>
        <position position="556"/>
    </location>
</feature>
<feature type="modified residue" description="Phosphoserine" evidence="25">
    <location>
        <position position="635"/>
    </location>
</feature>
<feature type="modified residue" description="Phosphoserine" evidence="20 26">
    <location>
        <position position="663"/>
    </location>
</feature>
<feature type="modified residue" description="Phosphothreonine" evidence="20 21 22 25 26">
    <location>
        <position position="668"/>
    </location>
</feature>
<feature type="modified residue" description="Phosphothreonine" evidence="21 25">
    <location>
        <position position="672"/>
    </location>
</feature>
<feature type="modified residue" description="Phosphoserine" evidence="21">
    <location>
        <position position="1155"/>
    </location>
</feature>
<feature type="modified residue" description="Phosphoserine" evidence="25">
    <location>
        <position position="1295"/>
    </location>
</feature>
<feature type="modified residue" description="Phosphoserine" evidence="21">
    <location>
        <position position="1300"/>
    </location>
</feature>
<feature type="modified residue" description="Phosphoserine" evidence="21">
    <location>
        <position position="1457"/>
    </location>
</feature>
<feature type="modified residue" description="Phosphoserine" evidence="21 25">
    <location>
        <position position="1458"/>
    </location>
</feature>
<feature type="modified residue" description="Phosphothreonine" evidence="25">
    <location>
        <position position="1462"/>
    </location>
</feature>
<feature type="modified residue" description="Phosphothreonine" evidence="21">
    <location>
        <position position="1475"/>
    </location>
</feature>
<feature type="modified residue" description="Phosphoserine" evidence="21 25">
    <location>
        <position position="1480"/>
    </location>
</feature>
<feature type="splice variant" id="VSP_042003" description="In isoform 2." evidence="18">
    <original>Q</original>
    <variation>QRICEVYSRNPASLLEEQIEGARRRVTQLQLKIQQETGGSV</variation>
    <location>
        <position position="194"/>
    </location>
</feature>
<feature type="sequence variant" id="VAR_061795" description="In dbSNP:rs868188.">
    <original>S</original>
    <variation>G</variation>
    <location>
        <position position="1416"/>
    </location>
</feature>
<feature type="sequence variant" id="VAR_024285" description="In dbSNP:rs945508." evidence="17">
    <original>H</original>
    <variation>R</variation>
    <location>
        <position position="1427"/>
    </location>
</feature>
<feature type="strand" evidence="31">
    <location>
        <begin position="41"/>
        <end position="51"/>
    </location>
</feature>
<feature type="strand" evidence="29">
    <location>
        <begin position="53"/>
        <end position="56"/>
    </location>
</feature>
<feature type="strand" evidence="31">
    <location>
        <begin position="59"/>
        <end position="62"/>
    </location>
</feature>
<feature type="strand" evidence="31">
    <location>
        <begin position="64"/>
        <end position="66"/>
    </location>
</feature>
<feature type="strand" evidence="31">
    <location>
        <begin position="68"/>
        <end position="72"/>
    </location>
</feature>
<feature type="strand" evidence="29">
    <location>
        <begin position="74"/>
        <end position="76"/>
    </location>
</feature>
<feature type="helix" evidence="31">
    <location>
        <begin position="77"/>
        <end position="80"/>
    </location>
</feature>
<feature type="strand" evidence="31">
    <location>
        <begin position="88"/>
        <end position="92"/>
    </location>
</feature>
<feature type="strand" evidence="29">
    <location>
        <begin position="98"/>
        <end position="100"/>
    </location>
</feature>
<feature type="helix" evidence="31">
    <location>
        <begin position="102"/>
        <end position="110"/>
    </location>
</feature>
<feature type="strand" evidence="31">
    <location>
        <begin position="112"/>
        <end position="126"/>
    </location>
</feature>
<feature type="helix" evidence="27">
    <location>
        <begin position="307"/>
        <end position="312"/>
    </location>
</feature>
<feature type="helix" evidence="27">
    <location>
        <begin position="314"/>
        <end position="319"/>
    </location>
</feature>
<feature type="helix" evidence="27">
    <location>
        <begin position="321"/>
        <end position="334"/>
    </location>
</feature>
<feature type="helix" evidence="27">
    <location>
        <begin position="338"/>
        <end position="349"/>
    </location>
</feature>
<feature type="helix" evidence="27">
    <location>
        <begin position="356"/>
        <end position="368"/>
    </location>
</feature>
<feature type="helix" evidence="27">
    <location>
        <begin position="381"/>
        <end position="392"/>
    </location>
</feature>
<feature type="helix" evidence="27">
    <location>
        <begin position="398"/>
        <end position="424"/>
    </location>
</feature>
<feature type="helix" evidence="27">
    <location>
        <begin position="428"/>
        <end position="431"/>
    </location>
</feature>
<feature type="turn" evidence="27">
    <location>
        <begin position="432"/>
        <end position="434"/>
    </location>
</feature>
<feature type="helix" evidence="27">
    <location>
        <begin position="435"/>
        <end position="438"/>
    </location>
</feature>
<feature type="helix" evidence="27">
    <location>
        <begin position="443"/>
        <end position="462"/>
    </location>
</feature>
<feature type="helix" evidence="27">
    <location>
        <begin position="466"/>
        <end position="482"/>
    </location>
</feature>
<feature type="strand" evidence="30">
    <location>
        <begin position="716"/>
        <end position="725"/>
    </location>
</feature>
<feature type="helix" evidence="30">
    <location>
        <begin position="730"/>
        <end position="759"/>
    </location>
</feature>
<feature type="helix" evidence="30">
    <location>
        <begin position="761"/>
        <end position="766"/>
    </location>
</feature>
<feature type="helix" evidence="30">
    <location>
        <begin position="772"/>
        <end position="778"/>
    </location>
</feature>
<feature type="strand" evidence="30">
    <location>
        <begin position="779"/>
        <end position="781"/>
    </location>
</feature>
<feature type="helix" evidence="30">
    <location>
        <begin position="782"/>
        <end position="801"/>
    </location>
</feature>
<feature type="helix" evidence="30">
    <location>
        <begin position="810"/>
        <end position="817"/>
    </location>
</feature>
<feature type="helix" evidence="30">
    <location>
        <begin position="819"/>
        <end position="833"/>
    </location>
</feature>
<feature type="helix" evidence="30">
    <location>
        <begin position="836"/>
        <end position="849"/>
    </location>
</feature>
<feature type="helix" evidence="30">
    <location>
        <begin position="851"/>
        <end position="862"/>
    </location>
</feature>
<feature type="helix" evidence="30">
    <location>
        <begin position="864"/>
        <end position="866"/>
    </location>
</feature>
<feature type="helix" evidence="30">
    <location>
        <begin position="871"/>
        <end position="874"/>
    </location>
</feature>
<feature type="helix" evidence="30">
    <location>
        <begin position="877"/>
        <end position="894"/>
    </location>
</feature>
<feature type="helix" evidence="30">
    <location>
        <begin position="901"/>
        <end position="939"/>
    </location>
</feature>
<feature type="turn" evidence="30">
    <location>
        <begin position="944"/>
        <end position="946"/>
    </location>
</feature>
<feature type="helix" evidence="30">
    <location>
        <begin position="951"/>
        <end position="956"/>
    </location>
</feature>
<feature type="helix" evidence="30">
    <location>
        <begin position="961"/>
        <end position="963"/>
    </location>
</feature>
<feature type="strand" evidence="30">
    <location>
        <begin position="966"/>
        <end position="975"/>
    </location>
</feature>
<feature type="strand" evidence="30">
    <location>
        <begin position="977"/>
        <end position="979"/>
    </location>
</feature>
<feature type="strand" evidence="30">
    <location>
        <begin position="981"/>
        <end position="999"/>
    </location>
</feature>
<feature type="strand" evidence="30">
    <location>
        <begin position="1002"/>
        <end position="1004"/>
    </location>
</feature>
<feature type="strand" evidence="30">
    <location>
        <begin position="1024"/>
        <end position="1027"/>
    </location>
</feature>
<feature type="helix" evidence="30">
    <location>
        <begin position="1028"/>
        <end position="1030"/>
    </location>
</feature>
<feature type="strand" evidence="30">
    <location>
        <begin position="1031"/>
        <end position="1035"/>
    </location>
</feature>
<feature type="strand" evidence="30">
    <location>
        <begin position="1042"/>
        <end position="1047"/>
    </location>
</feature>
<feature type="strand" evidence="28">
    <location>
        <begin position="1050"/>
        <end position="1052"/>
    </location>
</feature>
<feature type="strand" evidence="30">
    <location>
        <begin position="1057"/>
        <end position="1060"/>
    </location>
</feature>
<feature type="helix" evidence="30">
    <location>
        <begin position="1064"/>
        <end position="1080"/>
    </location>
</feature>
<gene>
    <name type="primary">ARHGEF11</name>
    <name type="synonym">KIAA0380</name>
</gene>
<protein>
    <recommendedName>
        <fullName>Rho guanine nucleotide exchange factor 11</fullName>
    </recommendedName>
    <alternativeName>
        <fullName>PDZ-RhoGEF</fullName>
    </alternativeName>
</protein>
<reference key="1">
    <citation type="journal article" date="1997" name="DNA Res.">
        <title>Prediction of the coding sequences of unidentified human genes. VII. The complete sequences of 100 new cDNA clones from brain which can code for large proteins in vitro.</title>
        <authorList>
            <person name="Nagase T."/>
            <person name="Ishikawa K."/>
            <person name="Nakajima D."/>
            <person name="Ohira M."/>
            <person name="Seki N."/>
            <person name="Miyajima N."/>
            <person name="Tanaka A."/>
            <person name="Kotani H."/>
            <person name="Nomura N."/>
            <person name="Ohara O."/>
        </authorList>
    </citation>
    <scope>NUCLEOTIDE SEQUENCE [LARGE SCALE MRNA] (ISOFORM 1)</scope>
    <source>
        <tissue>Brain</tissue>
    </source>
</reference>
<reference key="2">
    <citation type="journal article" date="2006" name="Nature">
        <title>The DNA sequence and biological annotation of human chromosome 1.</title>
        <authorList>
            <person name="Gregory S.G."/>
            <person name="Barlow K.F."/>
            <person name="McLay K.E."/>
            <person name="Kaul R."/>
            <person name="Swarbreck D."/>
            <person name="Dunham A."/>
            <person name="Scott C.E."/>
            <person name="Howe K.L."/>
            <person name="Woodfine K."/>
            <person name="Spencer C.C.A."/>
            <person name="Jones M.C."/>
            <person name="Gillson C."/>
            <person name="Searle S."/>
            <person name="Zhou Y."/>
            <person name="Kokocinski F."/>
            <person name="McDonald L."/>
            <person name="Evans R."/>
            <person name="Phillips K."/>
            <person name="Atkinson A."/>
            <person name="Cooper R."/>
            <person name="Jones C."/>
            <person name="Hall R.E."/>
            <person name="Andrews T.D."/>
            <person name="Lloyd C."/>
            <person name="Ainscough R."/>
            <person name="Almeida J.P."/>
            <person name="Ambrose K.D."/>
            <person name="Anderson F."/>
            <person name="Andrew R.W."/>
            <person name="Ashwell R.I.S."/>
            <person name="Aubin K."/>
            <person name="Babbage A.K."/>
            <person name="Bagguley C.L."/>
            <person name="Bailey J."/>
            <person name="Beasley H."/>
            <person name="Bethel G."/>
            <person name="Bird C.P."/>
            <person name="Bray-Allen S."/>
            <person name="Brown J.Y."/>
            <person name="Brown A.J."/>
            <person name="Buckley D."/>
            <person name="Burton J."/>
            <person name="Bye J."/>
            <person name="Carder C."/>
            <person name="Chapman J.C."/>
            <person name="Clark S.Y."/>
            <person name="Clarke G."/>
            <person name="Clee C."/>
            <person name="Cobley V."/>
            <person name="Collier R.E."/>
            <person name="Corby N."/>
            <person name="Coville G.J."/>
            <person name="Davies J."/>
            <person name="Deadman R."/>
            <person name="Dunn M."/>
            <person name="Earthrowl M."/>
            <person name="Ellington A.G."/>
            <person name="Errington H."/>
            <person name="Frankish A."/>
            <person name="Frankland J."/>
            <person name="French L."/>
            <person name="Garner P."/>
            <person name="Garnett J."/>
            <person name="Gay L."/>
            <person name="Ghori M.R.J."/>
            <person name="Gibson R."/>
            <person name="Gilby L.M."/>
            <person name="Gillett W."/>
            <person name="Glithero R.J."/>
            <person name="Grafham D.V."/>
            <person name="Griffiths C."/>
            <person name="Griffiths-Jones S."/>
            <person name="Grocock R."/>
            <person name="Hammond S."/>
            <person name="Harrison E.S.I."/>
            <person name="Hart E."/>
            <person name="Haugen E."/>
            <person name="Heath P.D."/>
            <person name="Holmes S."/>
            <person name="Holt K."/>
            <person name="Howden P.J."/>
            <person name="Hunt A.R."/>
            <person name="Hunt S.E."/>
            <person name="Hunter G."/>
            <person name="Isherwood J."/>
            <person name="James R."/>
            <person name="Johnson C."/>
            <person name="Johnson D."/>
            <person name="Joy A."/>
            <person name="Kay M."/>
            <person name="Kershaw J.K."/>
            <person name="Kibukawa M."/>
            <person name="Kimberley A.M."/>
            <person name="King A."/>
            <person name="Knights A.J."/>
            <person name="Lad H."/>
            <person name="Laird G."/>
            <person name="Lawlor S."/>
            <person name="Leongamornlert D.A."/>
            <person name="Lloyd D.M."/>
            <person name="Loveland J."/>
            <person name="Lovell J."/>
            <person name="Lush M.J."/>
            <person name="Lyne R."/>
            <person name="Martin S."/>
            <person name="Mashreghi-Mohammadi M."/>
            <person name="Matthews L."/>
            <person name="Matthews N.S.W."/>
            <person name="McLaren S."/>
            <person name="Milne S."/>
            <person name="Mistry S."/>
            <person name="Moore M.J.F."/>
            <person name="Nickerson T."/>
            <person name="O'Dell C.N."/>
            <person name="Oliver K."/>
            <person name="Palmeiri A."/>
            <person name="Palmer S.A."/>
            <person name="Parker A."/>
            <person name="Patel D."/>
            <person name="Pearce A.V."/>
            <person name="Peck A.I."/>
            <person name="Pelan S."/>
            <person name="Phelps K."/>
            <person name="Phillimore B.J."/>
            <person name="Plumb R."/>
            <person name="Rajan J."/>
            <person name="Raymond C."/>
            <person name="Rouse G."/>
            <person name="Saenphimmachak C."/>
            <person name="Sehra H.K."/>
            <person name="Sheridan E."/>
            <person name="Shownkeen R."/>
            <person name="Sims S."/>
            <person name="Skuce C.D."/>
            <person name="Smith M."/>
            <person name="Steward C."/>
            <person name="Subramanian S."/>
            <person name="Sycamore N."/>
            <person name="Tracey A."/>
            <person name="Tromans A."/>
            <person name="Van Helmond Z."/>
            <person name="Wall M."/>
            <person name="Wallis J.M."/>
            <person name="White S."/>
            <person name="Whitehead S.L."/>
            <person name="Wilkinson J.E."/>
            <person name="Willey D.L."/>
            <person name="Williams H."/>
            <person name="Wilming L."/>
            <person name="Wray P.W."/>
            <person name="Wu Z."/>
            <person name="Coulson A."/>
            <person name="Vaudin M."/>
            <person name="Sulston J.E."/>
            <person name="Durbin R.M."/>
            <person name="Hubbard T."/>
            <person name="Wooster R."/>
            <person name="Dunham I."/>
            <person name="Carter N.P."/>
            <person name="McVean G."/>
            <person name="Ross M.T."/>
            <person name="Harrow J."/>
            <person name="Olson M.V."/>
            <person name="Beck S."/>
            <person name="Rogers J."/>
            <person name="Bentley D.R."/>
        </authorList>
    </citation>
    <scope>NUCLEOTIDE SEQUENCE [LARGE SCALE GENOMIC DNA]</scope>
</reference>
<reference key="3">
    <citation type="submission" date="2005-09" db="EMBL/GenBank/DDBJ databases">
        <authorList>
            <person name="Mural R.J."/>
            <person name="Istrail S."/>
            <person name="Sutton G.G."/>
            <person name="Florea L."/>
            <person name="Halpern A.L."/>
            <person name="Mobarry C.M."/>
            <person name="Lippert R."/>
            <person name="Walenz B."/>
            <person name="Shatkay H."/>
            <person name="Dew I."/>
            <person name="Miller J.R."/>
            <person name="Flanigan M.J."/>
            <person name="Edwards N.J."/>
            <person name="Bolanos R."/>
            <person name="Fasulo D."/>
            <person name="Halldorsson B.V."/>
            <person name="Hannenhalli S."/>
            <person name="Turner R."/>
            <person name="Yooseph S."/>
            <person name="Lu F."/>
            <person name="Nusskern D.R."/>
            <person name="Shue B.C."/>
            <person name="Zheng X.H."/>
            <person name="Zhong F."/>
            <person name="Delcher A.L."/>
            <person name="Huson D.H."/>
            <person name="Kravitz S.A."/>
            <person name="Mouchard L."/>
            <person name="Reinert K."/>
            <person name="Remington K.A."/>
            <person name="Clark A.G."/>
            <person name="Waterman M.S."/>
            <person name="Eichler E.E."/>
            <person name="Adams M.D."/>
            <person name="Hunkapiller M.W."/>
            <person name="Myers E.W."/>
            <person name="Venter J.C."/>
        </authorList>
    </citation>
    <scope>NUCLEOTIDE SEQUENCE [LARGE SCALE GENOMIC DNA]</scope>
    <scope>VARIANT ARG-1427</scope>
</reference>
<reference key="4">
    <citation type="journal article" date="2004" name="Genome Res.">
        <title>The status, quality, and expansion of the NIH full-length cDNA project: the Mammalian Gene Collection (MGC).</title>
        <authorList>
            <consortium name="The MGC Project Team"/>
        </authorList>
    </citation>
    <scope>NUCLEOTIDE SEQUENCE [LARGE SCALE MRNA] (ISOFORM 2)</scope>
    <source>
        <tissue>Skin</tissue>
    </source>
</reference>
<reference key="5">
    <citation type="journal article" date="1999" name="FEBS Lett.">
        <title>Rho-specific binding and guanine nucleotide exchange catalysis by KIAA0380, a dbl family member.</title>
        <authorList>
            <person name="Ruemenapp U."/>
            <person name="Blomquist A."/>
            <person name="Schwoerer G."/>
            <person name="Schablowski H."/>
            <person name="Psoma A."/>
            <person name="Jakobs K.H."/>
        </authorList>
    </citation>
    <scope>INTERACTION WITH RHOA</scope>
</reference>
<reference key="6">
    <citation type="journal article" date="1999" name="J. Biol. Chem.">
        <title>A novel PDZ domain containing guanine nucleotide exchange factor links heterotrimeric G proteins to Rho.</title>
        <authorList>
            <person name="Fukuhara S."/>
            <person name="Murga C."/>
            <person name="Zohar M."/>
            <person name="Igishi T."/>
            <person name="Gutkind J.S."/>
        </authorList>
    </citation>
    <scope>INTERACTION WITH GNA12 AND GNA13</scope>
    <scope>TISSUE SPECIFICITY</scope>
    <source>
        <tissue>Brain</tissue>
    </source>
</reference>
<reference key="7">
    <citation type="journal article" date="2002" name="FEBS Lett.">
        <title>B plexins activate Rho through PDZ-RhoGEF.</title>
        <authorList>
            <person name="Driessens M.H.E."/>
            <person name="Olivo C."/>
            <person name="Nagata K."/>
            <person name="Inagaki M."/>
            <person name="Collard J.G."/>
        </authorList>
    </citation>
    <scope>INTERACTION WITH PLXNB1 AND PLXNB2</scope>
</reference>
<reference key="8">
    <citation type="journal article" date="2002" name="J. Biol. Chem.">
        <title>Plexin B regulates Rho through the guanine nucleotide exchange factors leukemia-associated Rho GEF (LARG) and PDZ-RhoGEF.</title>
        <authorList>
            <person name="Perrot V."/>
            <person name="Vazquez-Prado J."/>
            <person name="Gutkind J.S."/>
        </authorList>
    </citation>
    <scope>INTERACTION WITH PLXNB1 AND PLXNB2</scope>
</reference>
<reference key="9">
    <citation type="journal article" date="2000" name="J. Biol. Chem.">
        <title>Functions of a rho-specific guanine nucleotide exchange factor in neurite retraction. Possible role of a proline-rich motif of KIAA0380 in localization.</title>
        <authorList>
            <person name="Togashi H."/>
            <person name="Nagata K."/>
            <person name="Takagishi M."/>
            <person name="Saitoh N."/>
            <person name="Inagaki M."/>
        </authorList>
    </citation>
    <scope>SUBCELLULAR LOCATION</scope>
</reference>
<reference key="10">
    <citation type="journal article" date="2006" name="Cell">
        <title>Global, in vivo, and site-specific phosphorylation dynamics in signaling networks.</title>
        <authorList>
            <person name="Olsen J.V."/>
            <person name="Blagoev B."/>
            <person name="Gnad F."/>
            <person name="Macek B."/>
            <person name="Kumar C."/>
            <person name="Mortensen P."/>
            <person name="Mann M."/>
        </authorList>
    </citation>
    <scope>PHOSPHORYLATION [LARGE SCALE ANALYSIS] AT SER-663 AND THR-668</scope>
    <scope>IDENTIFICATION BY MASS SPECTROMETRY [LARGE SCALE ANALYSIS]</scope>
    <source>
        <tissue>Cervix carcinoma</tissue>
    </source>
</reference>
<reference key="11">
    <citation type="journal article" date="2008" name="Proc. Natl. Acad. Sci. U.S.A.">
        <title>A quantitative atlas of mitotic phosphorylation.</title>
        <authorList>
            <person name="Dephoure N."/>
            <person name="Zhou C."/>
            <person name="Villen J."/>
            <person name="Beausoleil S.A."/>
            <person name="Bakalarski C.E."/>
            <person name="Elledge S.J."/>
            <person name="Gygi S.P."/>
        </authorList>
    </citation>
    <scope>PHOSPHORYLATION [LARGE SCALE ANALYSIS] AT SER-245; SER-251; THR-254; THR-668; THR-672; SER-1155; SER-1300; SER-1457; SER-1458; THR-1475 AND SER-1480</scope>
    <scope>IDENTIFICATION BY MASS SPECTROMETRY [LARGE SCALE ANALYSIS]</scope>
    <source>
        <tissue>Cervix carcinoma</tissue>
    </source>
</reference>
<reference key="12">
    <citation type="journal article" date="2009" name="Sci. Signal.">
        <title>Quantitative phosphoproteomic analysis of T cell receptor signaling reveals system-wide modulation of protein-protein interactions.</title>
        <authorList>
            <person name="Mayya V."/>
            <person name="Lundgren D.H."/>
            <person name="Hwang S.-I."/>
            <person name="Rezaul K."/>
            <person name="Wu L."/>
            <person name="Eng J.K."/>
            <person name="Rodionov V."/>
            <person name="Han D.K."/>
        </authorList>
    </citation>
    <scope>PHOSPHORYLATION [LARGE SCALE ANALYSIS] AT THR-668</scope>
    <scope>IDENTIFICATION BY MASS SPECTROMETRY [LARGE SCALE ANALYSIS]</scope>
    <source>
        <tissue>Leukemic T-cell</tissue>
    </source>
</reference>
<reference key="13">
    <citation type="journal article" date="2010" name="Blood">
        <title>HGAL, a germinal center specific protein, decreases lymphoma cell motility by modulation of the RhoA signaling pathway.</title>
        <authorList>
            <person name="Jiang X."/>
            <person name="Lu X."/>
            <person name="McNamara G."/>
            <person name="Liu X."/>
            <person name="Cubedo E."/>
            <person name="Sarosiek K.A."/>
            <person name="Sanchez-Garcia I."/>
            <person name="Helfman D.M."/>
            <person name="Lossos I.S."/>
        </authorList>
    </citation>
    <scope>INTERACTION WITH GCSAM</scope>
</reference>
<reference key="14">
    <citation type="journal article" date="2010" name="Sci. Signal.">
        <title>Quantitative phosphoproteomics reveals widespread full phosphorylation site occupancy during mitosis.</title>
        <authorList>
            <person name="Olsen J.V."/>
            <person name="Vermeulen M."/>
            <person name="Santamaria A."/>
            <person name="Kumar C."/>
            <person name="Miller M.L."/>
            <person name="Jensen L.J."/>
            <person name="Gnad F."/>
            <person name="Cox J."/>
            <person name="Jensen T.S."/>
            <person name="Nigg E.A."/>
            <person name="Brunak S."/>
            <person name="Mann M."/>
        </authorList>
    </citation>
    <scope>PHOSPHORYLATION [LARGE SCALE ANALYSIS] AT SER-245</scope>
    <scope>IDENTIFICATION BY MASS SPECTROMETRY [LARGE SCALE ANALYSIS]</scope>
    <source>
        <tissue>Cervix carcinoma</tissue>
    </source>
</reference>
<reference key="15">
    <citation type="journal article" date="2011" name="J. Cell Biol.">
        <title>PDZ-RhoGEF ubiquitination by Cullin3-KLHL20 controls neurotrophin-induced neurite outgrowth.</title>
        <authorList>
            <person name="Lin M.Y."/>
            <person name="Lin Y.M."/>
            <person name="Kao T.C."/>
            <person name="Chuang H.H."/>
            <person name="Chen R.H."/>
        </authorList>
    </citation>
    <scope>FUNCTION</scope>
    <scope>UBIQUITINATION</scope>
    <scope>PHOSPHORYLATION</scope>
</reference>
<reference key="16">
    <citation type="journal article" date="2011" name="Sci. Signal.">
        <title>System-wide temporal characterization of the proteome and phosphoproteome of human embryonic stem cell differentiation.</title>
        <authorList>
            <person name="Rigbolt K.T."/>
            <person name="Prokhorova T.A."/>
            <person name="Akimov V."/>
            <person name="Henningsen J."/>
            <person name="Johansen P.T."/>
            <person name="Kratchmarova I."/>
            <person name="Kassem M."/>
            <person name="Mann M."/>
            <person name="Olsen J.V."/>
            <person name="Blagoev B."/>
        </authorList>
    </citation>
    <scope>PHOSPHORYLATION [LARGE SCALE ANALYSIS] AT SER-251</scope>
    <scope>IDENTIFICATION BY MASS SPECTROMETRY [LARGE SCALE ANALYSIS]</scope>
</reference>
<reference key="17">
    <citation type="journal article" date="2013" name="J. Proteome Res.">
        <title>Toward a comprehensive characterization of a human cancer cell phosphoproteome.</title>
        <authorList>
            <person name="Zhou H."/>
            <person name="Di Palma S."/>
            <person name="Preisinger C."/>
            <person name="Peng M."/>
            <person name="Polat A.N."/>
            <person name="Heck A.J."/>
            <person name="Mohammed S."/>
        </authorList>
    </citation>
    <scope>PHOSPHORYLATION [LARGE SCALE ANALYSIS] AT SER-2; SER-16; SER-35; SER-556; SER-635; THR-668; THR-672; SER-1295; SER-1458; THR-1462 AND SER-1480</scope>
    <scope>IDENTIFICATION BY MASS SPECTROMETRY [LARGE SCALE ANALYSIS]</scope>
    <source>
        <tissue>Cervix carcinoma</tissue>
        <tissue>Erythroleukemia</tissue>
    </source>
</reference>
<reference key="18">
    <citation type="journal article" date="2014" name="J. Proteomics">
        <title>An enzyme assisted RP-RPLC approach for in-depth analysis of human liver phosphoproteome.</title>
        <authorList>
            <person name="Bian Y."/>
            <person name="Song C."/>
            <person name="Cheng K."/>
            <person name="Dong M."/>
            <person name="Wang F."/>
            <person name="Huang J."/>
            <person name="Sun D."/>
            <person name="Wang L."/>
            <person name="Ye M."/>
            <person name="Zou H."/>
        </authorList>
    </citation>
    <scope>PHOSPHORYLATION [LARGE SCALE ANALYSIS] AT SER-663 AND THR-668</scope>
    <scope>IDENTIFICATION BY MASS SPECTROMETRY [LARGE SCALE ANALYSIS]</scope>
    <source>
        <tissue>Liver</tissue>
    </source>
</reference>
<reference key="19">
    <citation type="journal article" date="2020" name="Nat. Cell Biol.">
        <title>Systems analysis of RhoGEF and RhoGAP regulatory proteins reveals spatially organized RAC1 signalling from integrin adhesions.</title>
        <authorList>
            <person name="Mueller P.M."/>
            <person name="Rademacher J."/>
            <person name="Bagshaw R.D."/>
            <person name="Wortmann C."/>
            <person name="Barth C."/>
            <person name="van Unen J."/>
            <person name="Alp K.M."/>
            <person name="Giudice G."/>
            <person name="Eccles R.L."/>
            <person name="Heinrich L.E."/>
            <person name="Pascual-Vargas P."/>
            <person name="Sanchez-Castro M."/>
            <person name="Brandenburg L."/>
            <person name="Mbamalu G."/>
            <person name="Tucholska M."/>
            <person name="Spatt L."/>
            <person name="Czajkowski M.T."/>
            <person name="Welke R.W."/>
            <person name="Zhang S."/>
            <person name="Nguyen V."/>
            <person name="Rrustemi T."/>
            <person name="Trnka P."/>
            <person name="Freitag K."/>
            <person name="Larsen B."/>
            <person name="Popp O."/>
            <person name="Mertins P."/>
            <person name="Gingras A.C."/>
            <person name="Roth F.P."/>
            <person name="Colwill K."/>
            <person name="Bakal C."/>
            <person name="Pertz O."/>
            <person name="Pawson T."/>
            <person name="Petsalaki E."/>
            <person name="Rocks O."/>
        </authorList>
    </citation>
    <scope>INTERACTION WITH PLEKHG4B</scope>
</reference>
<reference key="20">
    <citation type="journal article" date="2001" name="Structure">
        <title>Structure of the RGS-like domain from PDZ-RhoGEF: linking heterotrimeric g protein-coupled signaling to Rho GTPases.</title>
        <authorList>
            <person name="Longenecker K.L."/>
            <person name="Lewis M.E."/>
            <person name="Chikumi H."/>
            <person name="Gutkind J.S."/>
            <person name="Derewenda Z.S."/>
        </authorList>
    </citation>
    <scope>X-RAY CRYSTALLOGRAPHY (2.2 ANGSTROMS) OF 281-490</scope>
</reference>
<reference key="21">
    <citation type="submission" date="2006-10" db="PDB data bank">
        <title>Solution structure of the PDZ domain of human Rho guanine nucleotide exchange factor 11.</title>
        <authorList>
            <consortium name="RIKEN structural genomics initiative (RSGI)"/>
        </authorList>
    </citation>
    <scope>STRUCTURE BY NMR OF 44-123</scope>
</reference>
<proteinExistence type="evidence at protein level"/>
<sequence length="1522" mass="167704">MSVRLPQSIDRLSSLSSLGDSAPERKSPSHHRQPSDASETTGLVQRCVIIQKDQHGFGFTVSGDRIVLVQSVRPGGAAMKAGVKEGDRIIKVNGTMVTNSSHLEVVKLIKSGAYVALTLLGSSPSSMGISGLQQDPSPAGAPRITSVIPSPPPPPPLPPPQRITGPKPLQDPEVQKHATQILRNMLRQEEKELQDILPLYGDTSQRPSEGRLSLDSQEGDSGLDSGTERFPSLSESLMNRNSVLSDPGLDSPRTSPVIMARVAQHHRRQGSDAAVPSTGDQGVDQSPKPLIIGPEEDYDPGYFNNESDIIFQDLEKLKSRPAHLGVFLRYIFSQADPSPLLFYLCAEVYQQASPKDSRSLGKDIWNIFLEKNAPLRVKIPEMLQAEIDSRLRNSEDARGVLCEAQEAAMPEIQEQIHDYRTKRTLGLGSLYGENDLLDLDGDPLRERQVAEKQLAALGDILSKYEEDRSAPMDFALNTYMSHAGIRLREARPSNTAEKAQSAPDKDKWLPFFPKTKKSSNSKKEKDALEDKKRNPILKYIGKPKSSSQSTFHIPLSPVEVKPGNVRNIIQHFENNQQYDAPEPGTQRLSTGSFPEDLLESDSSRSEIRLGRSESLKGREEMKRSRKAENVPRSRSDVDMDAAAEATRLHQSASSSTSSLSTRSLENPTPPFTPKMGRRSIESPSLGFCTDTLLPHLLEDDLGQLSDLEPEPDAQNWQHTVGKDVVAGLTQREIDRQEVINELFVTEASHLRTLRVLDLIFYQRMKKENLMPREELARLFPNLPELIEIHNSWCEAMKKLREEGPIIKEISDLMLARFDGPAREELQQVAAQFCSYQSIALELIKTKQRKESRFQLFMQEAESHPQCRRLQLRDLIISEMQRLTKYPLLLESIIKHTEGGTSEHEKLCRARDQCREILKYVNEAVKQTENRHRLEGYQKRLDATALERASNPLAAEFKSLDLTTRKMIHEGPLTWRISKDKTLDLHVLLLEDLLVLLQKQDEKLLLKCHSKTAVGSSDSKQTFSPVLKLNAVLIRSVATDKRAFFIICTSKLGPPQIYELVALTSSDKNTWMELLEEAVRNATRHPGAAPMPVHPPPPGPREPAQQGPTPSRVELDDSDVFHGEPEPEELPGGTGSQQRVQGKHQVLLEDPEQEGSAEEEELGVLPCPSTSLDGENRGIRTRNPIHLAFPGPLFMEGLADSALEDVENLRHLILWSLLPGHTMETQAAQEPEDDLTPTPSVISVTSHPWDPGSPGQAPPGGEGDNTQLAGLEGERPEQEDMGLCSLEHLPPRTRNSGIWESPELDRNLAEDASSTEAAGGYKVVRKAEVAGSKVVPALPESGQSEPGPPEVEGGTKATGNCFYVSMPSGPPDSSTDHSEAPMSPPQPDSLPAGQTEPQPQLQGGNDDPRRPSRSPPSLALRDVGMIFHTIEQLTLKLNRLKDMELAHRELLKSLGGESSGGTTPVGSFHTEAARWTDGSLSPPAKEPLASDSRNSHELGPCPEDGSDAPLEDSTADAAASPGP</sequence>
<name>ARHGB_HUMAN</name>
<keyword id="KW-0002">3D-structure</keyword>
<keyword id="KW-0025">Alternative splicing</keyword>
<keyword id="KW-0175">Coiled coil</keyword>
<keyword id="KW-0963">Cytoplasm</keyword>
<keyword id="KW-0343">GTPase activation</keyword>
<keyword id="KW-0344">Guanine-nucleotide releasing factor</keyword>
<keyword id="KW-0472">Membrane</keyword>
<keyword id="KW-0597">Phosphoprotein</keyword>
<keyword id="KW-1267">Proteomics identification</keyword>
<keyword id="KW-1185">Reference proteome</keyword>
<keyword id="KW-0832">Ubl conjugation</keyword>
<evidence type="ECO:0000250" key="1"/>
<evidence type="ECO:0000250" key="2">
    <source>
        <dbReference type="UniProtKB" id="Q9ES67"/>
    </source>
</evidence>
<evidence type="ECO:0000255" key="3"/>
<evidence type="ECO:0000255" key="4">
    <source>
        <dbReference type="PROSITE-ProRule" id="PRU00062"/>
    </source>
</evidence>
<evidence type="ECO:0000255" key="5">
    <source>
        <dbReference type="PROSITE-ProRule" id="PRU00143"/>
    </source>
</evidence>
<evidence type="ECO:0000255" key="6">
    <source>
        <dbReference type="PROSITE-ProRule" id="PRU00145"/>
    </source>
</evidence>
<evidence type="ECO:0000255" key="7">
    <source>
        <dbReference type="PROSITE-ProRule" id="PRU00171"/>
    </source>
</evidence>
<evidence type="ECO:0000256" key="8">
    <source>
        <dbReference type="SAM" id="MobiDB-lite"/>
    </source>
</evidence>
<evidence type="ECO:0000269" key="9">
    <source>
    </source>
</evidence>
<evidence type="ECO:0000269" key="10">
    <source>
    </source>
</evidence>
<evidence type="ECO:0000269" key="11">
    <source>
    </source>
</evidence>
<evidence type="ECO:0000269" key="12">
    <source>
    </source>
</evidence>
<evidence type="ECO:0000269" key="13">
    <source>
    </source>
</evidence>
<evidence type="ECO:0000269" key="14">
    <source>
    </source>
</evidence>
<evidence type="ECO:0000269" key="15">
    <source>
    </source>
</evidence>
<evidence type="ECO:0000269" key="16">
    <source>
    </source>
</evidence>
<evidence type="ECO:0000269" key="17">
    <source ref="3"/>
</evidence>
<evidence type="ECO:0000303" key="18">
    <source>
    </source>
</evidence>
<evidence type="ECO:0000305" key="19"/>
<evidence type="ECO:0007744" key="20">
    <source>
    </source>
</evidence>
<evidence type="ECO:0007744" key="21">
    <source>
    </source>
</evidence>
<evidence type="ECO:0007744" key="22">
    <source>
    </source>
</evidence>
<evidence type="ECO:0007744" key="23">
    <source>
    </source>
</evidence>
<evidence type="ECO:0007744" key="24">
    <source>
    </source>
</evidence>
<evidence type="ECO:0007744" key="25">
    <source>
    </source>
</evidence>
<evidence type="ECO:0007744" key="26">
    <source>
    </source>
</evidence>
<evidence type="ECO:0007829" key="27">
    <source>
        <dbReference type="PDB" id="1HTJ"/>
    </source>
</evidence>
<evidence type="ECO:0007829" key="28">
    <source>
        <dbReference type="PDB" id="1XCG"/>
    </source>
</evidence>
<evidence type="ECO:0007829" key="29">
    <source>
        <dbReference type="PDB" id="2DLS"/>
    </source>
</evidence>
<evidence type="ECO:0007829" key="30">
    <source>
        <dbReference type="PDB" id="5JHH"/>
    </source>
</evidence>
<evidence type="ECO:0007829" key="31">
    <source>
        <dbReference type="PDB" id="5TYT"/>
    </source>
</evidence>
<organism>
    <name type="scientific">Homo sapiens</name>
    <name type="common">Human</name>
    <dbReference type="NCBI Taxonomy" id="9606"/>
    <lineage>
        <taxon>Eukaryota</taxon>
        <taxon>Metazoa</taxon>
        <taxon>Chordata</taxon>
        <taxon>Craniata</taxon>
        <taxon>Vertebrata</taxon>
        <taxon>Euteleostomi</taxon>
        <taxon>Mammalia</taxon>
        <taxon>Eutheria</taxon>
        <taxon>Euarchontoglires</taxon>
        <taxon>Primates</taxon>
        <taxon>Haplorrhini</taxon>
        <taxon>Catarrhini</taxon>
        <taxon>Hominidae</taxon>
        <taxon>Homo</taxon>
    </lineage>
</organism>
<dbReference type="EMBL" id="AB002378">
    <property type="protein sequence ID" value="BAA20834.2"/>
    <property type="status" value="ALT_INIT"/>
    <property type="molecule type" value="mRNA"/>
</dbReference>
<dbReference type="EMBL" id="AL356104">
    <property type="status" value="NOT_ANNOTATED_CDS"/>
    <property type="molecule type" value="Genomic_DNA"/>
</dbReference>
<dbReference type="EMBL" id="AL157713">
    <property type="status" value="NOT_ANNOTATED_CDS"/>
    <property type="molecule type" value="Genomic_DNA"/>
</dbReference>
<dbReference type="EMBL" id="CH471121">
    <property type="protein sequence ID" value="EAW52893.1"/>
    <property type="molecule type" value="Genomic_DNA"/>
</dbReference>
<dbReference type="EMBL" id="CH471121">
    <property type="protein sequence ID" value="EAW52894.1"/>
    <property type="molecule type" value="Genomic_DNA"/>
</dbReference>
<dbReference type="EMBL" id="BC057394">
    <property type="protein sequence ID" value="AAH57394.1"/>
    <property type="molecule type" value="mRNA"/>
</dbReference>
<dbReference type="CCDS" id="CCDS1162.1">
    <molecule id="O15085-1"/>
</dbReference>
<dbReference type="CCDS" id="CCDS1163.1">
    <molecule id="O15085-2"/>
</dbReference>
<dbReference type="RefSeq" id="NP_055599.1">
    <molecule id="O15085-1"/>
    <property type="nucleotide sequence ID" value="NM_014784.4"/>
</dbReference>
<dbReference type="RefSeq" id="NP_937879.1">
    <molecule id="O15085-2"/>
    <property type="nucleotide sequence ID" value="NM_198236.3"/>
</dbReference>
<dbReference type="PDB" id="1HTJ">
    <property type="method" value="X-ray"/>
    <property type="resolution" value="2.20 A"/>
    <property type="chains" value="F=281-490"/>
</dbReference>
<dbReference type="PDB" id="1XCG">
    <property type="method" value="X-ray"/>
    <property type="resolution" value="2.50 A"/>
    <property type="chains" value="A/E=714-1081"/>
</dbReference>
<dbReference type="PDB" id="2DLS">
    <property type="method" value="NMR"/>
    <property type="chains" value="A=44-123"/>
</dbReference>
<dbReference type="PDB" id="3KZ1">
    <property type="method" value="X-ray"/>
    <property type="resolution" value="2.70 A"/>
    <property type="chains" value="A/B=710-1085"/>
</dbReference>
<dbReference type="PDB" id="3T06">
    <property type="method" value="X-ray"/>
    <property type="resolution" value="2.84 A"/>
    <property type="chains" value="A/E=672-1081"/>
</dbReference>
<dbReference type="PDB" id="5E6P">
    <property type="method" value="X-ray"/>
    <property type="resolution" value="3.21 A"/>
    <property type="chains" value="B=42-125"/>
</dbReference>
<dbReference type="PDB" id="5JHG">
    <property type="method" value="X-ray"/>
    <property type="resolution" value="2.50 A"/>
    <property type="chains" value="A/E=714-1081"/>
</dbReference>
<dbReference type="PDB" id="5JHH">
    <property type="method" value="X-ray"/>
    <property type="resolution" value="2.30 A"/>
    <property type="chains" value="A/E=714-1081"/>
</dbReference>
<dbReference type="PDB" id="5TYT">
    <property type="method" value="X-ray"/>
    <property type="resolution" value="2.40 A"/>
    <property type="chains" value="A/B/C/D=41-123"/>
</dbReference>
<dbReference type="PDBsum" id="1HTJ"/>
<dbReference type="PDBsum" id="1XCG"/>
<dbReference type="PDBsum" id="2DLS"/>
<dbReference type="PDBsum" id="3KZ1"/>
<dbReference type="PDBsum" id="3T06"/>
<dbReference type="PDBsum" id="5E6P"/>
<dbReference type="PDBsum" id="5JHG"/>
<dbReference type="PDBsum" id="5JHH"/>
<dbReference type="PDBsum" id="5TYT"/>
<dbReference type="SMR" id="O15085"/>
<dbReference type="BioGRID" id="115164">
    <property type="interactions" value="70"/>
</dbReference>
<dbReference type="DIP" id="DIP-31622N"/>
<dbReference type="FunCoup" id="O15085">
    <property type="interactions" value="2920"/>
</dbReference>
<dbReference type="IntAct" id="O15085">
    <property type="interactions" value="58"/>
</dbReference>
<dbReference type="MINT" id="O15085"/>
<dbReference type="STRING" id="9606.ENSP00000357177"/>
<dbReference type="ChEMBL" id="CHEMBL4523642"/>
<dbReference type="GlyCosmos" id="O15085">
    <property type="glycosylation" value="1 site, 2 glycans"/>
</dbReference>
<dbReference type="GlyGen" id="O15085">
    <property type="glycosylation" value="5 sites, 2 O-linked glycans (3 sites)"/>
</dbReference>
<dbReference type="iPTMnet" id="O15085"/>
<dbReference type="PhosphoSitePlus" id="O15085"/>
<dbReference type="BioMuta" id="ARHGEF11"/>
<dbReference type="jPOST" id="O15085"/>
<dbReference type="MassIVE" id="O15085"/>
<dbReference type="PaxDb" id="9606-ENSP00000357177"/>
<dbReference type="PeptideAtlas" id="O15085"/>
<dbReference type="ProteomicsDB" id="48441">
    <molecule id="O15085-1"/>
</dbReference>
<dbReference type="ProteomicsDB" id="48442">
    <molecule id="O15085-2"/>
</dbReference>
<dbReference type="Pumba" id="O15085"/>
<dbReference type="Antibodypedia" id="1659">
    <property type="antibodies" value="263 antibodies from 29 providers"/>
</dbReference>
<dbReference type="DNASU" id="9826"/>
<dbReference type="Ensembl" id="ENST00000361409.2">
    <molecule id="O15085-1"/>
    <property type="protein sequence ID" value="ENSP00000354644.2"/>
    <property type="gene ID" value="ENSG00000132694.20"/>
</dbReference>
<dbReference type="Ensembl" id="ENST00000368194.8">
    <molecule id="O15085-2"/>
    <property type="protein sequence ID" value="ENSP00000357177.3"/>
    <property type="gene ID" value="ENSG00000132694.20"/>
</dbReference>
<dbReference type="GeneID" id="9826"/>
<dbReference type="KEGG" id="hsa:9826"/>
<dbReference type="MANE-Select" id="ENST00000368194.8">
    <molecule id="O15085-2"/>
    <property type="protein sequence ID" value="ENSP00000357177.3"/>
    <property type="RefSeq nucleotide sequence ID" value="NM_198236.3"/>
    <property type="RefSeq protein sequence ID" value="NP_937879.1"/>
</dbReference>
<dbReference type="UCSC" id="uc001fqn.3">
    <molecule id="O15085-1"/>
    <property type="organism name" value="human"/>
</dbReference>
<dbReference type="AGR" id="HGNC:14580"/>
<dbReference type="CTD" id="9826"/>
<dbReference type="DisGeNET" id="9826"/>
<dbReference type="GeneCards" id="ARHGEF11"/>
<dbReference type="HGNC" id="HGNC:14580">
    <property type="gene designation" value="ARHGEF11"/>
</dbReference>
<dbReference type="HPA" id="ENSG00000132694">
    <property type="expression patterns" value="Low tissue specificity"/>
</dbReference>
<dbReference type="MIM" id="605708">
    <property type="type" value="gene"/>
</dbReference>
<dbReference type="neXtProt" id="NX_O15085"/>
<dbReference type="OpenTargets" id="ENSG00000132694"/>
<dbReference type="PharmGKB" id="PA24968"/>
<dbReference type="VEuPathDB" id="HostDB:ENSG00000132694"/>
<dbReference type="eggNOG" id="KOG3520">
    <property type="taxonomic scope" value="Eukaryota"/>
</dbReference>
<dbReference type="GeneTree" id="ENSGT00940000158350"/>
<dbReference type="HOGENOM" id="CLU_003962_5_0_1"/>
<dbReference type="InParanoid" id="O15085"/>
<dbReference type="OMA" id="FICGERQ"/>
<dbReference type="OrthoDB" id="2272012at2759"/>
<dbReference type="PAN-GO" id="O15085">
    <property type="GO annotations" value="4 GO annotations based on evolutionary models"/>
</dbReference>
<dbReference type="PhylomeDB" id="O15085"/>
<dbReference type="TreeFam" id="TF106495"/>
<dbReference type="PathwayCommons" id="O15085"/>
<dbReference type="Reactome" id="R-HSA-193648">
    <property type="pathway name" value="NRAGE signals death through JNK"/>
</dbReference>
<dbReference type="Reactome" id="R-HSA-416482">
    <property type="pathway name" value="G alpha (12/13) signalling events"/>
</dbReference>
<dbReference type="Reactome" id="R-HSA-416572">
    <property type="pathway name" value="Sema4D induced cell migration and growth-cone collapse"/>
</dbReference>
<dbReference type="Reactome" id="R-HSA-8980692">
    <property type="pathway name" value="RHOA GTPase cycle"/>
</dbReference>
<dbReference type="Reactome" id="R-HSA-9013026">
    <property type="pathway name" value="RHOB GTPase cycle"/>
</dbReference>
<dbReference type="Reactome" id="R-HSA-9013106">
    <property type="pathway name" value="RHOC GTPase cycle"/>
</dbReference>
<dbReference type="Reactome" id="R-HSA-9013148">
    <property type="pathway name" value="CDC42 GTPase cycle"/>
</dbReference>
<dbReference type="Reactome" id="R-HSA-9013149">
    <property type="pathway name" value="RAC1 GTPase cycle"/>
</dbReference>
<dbReference type="SignaLink" id="O15085"/>
<dbReference type="SIGNOR" id="O15085"/>
<dbReference type="BioGRID-ORCS" id="9826">
    <property type="hits" value="19 hits in 1161 CRISPR screens"/>
</dbReference>
<dbReference type="ChiTaRS" id="ARHGEF11">
    <property type="organism name" value="human"/>
</dbReference>
<dbReference type="EvolutionaryTrace" id="O15085"/>
<dbReference type="GeneWiki" id="ARHGEF11"/>
<dbReference type="GenomeRNAi" id="9826"/>
<dbReference type="Pharos" id="O15085">
    <property type="development level" value="Tbio"/>
</dbReference>
<dbReference type="PRO" id="PR:O15085"/>
<dbReference type="Proteomes" id="UP000005640">
    <property type="component" value="Chromosome 1"/>
</dbReference>
<dbReference type="RNAct" id="O15085">
    <property type="molecule type" value="protein"/>
</dbReference>
<dbReference type="Bgee" id="ENSG00000132694">
    <property type="expression patterns" value="Expressed in right testis and 95 other cell types or tissues"/>
</dbReference>
<dbReference type="GO" id="GO:0005737">
    <property type="term" value="C:cytoplasm"/>
    <property type="evidence" value="ECO:0000314"/>
    <property type="project" value="MGI"/>
</dbReference>
<dbReference type="GO" id="GO:0005829">
    <property type="term" value="C:cytosol"/>
    <property type="evidence" value="ECO:0000304"/>
    <property type="project" value="Reactome"/>
</dbReference>
<dbReference type="GO" id="GO:0005654">
    <property type="term" value="C:nucleoplasm"/>
    <property type="evidence" value="ECO:0000314"/>
    <property type="project" value="HPA"/>
</dbReference>
<dbReference type="GO" id="GO:0005886">
    <property type="term" value="C:plasma membrane"/>
    <property type="evidence" value="ECO:0000314"/>
    <property type="project" value="HPA"/>
</dbReference>
<dbReference type="GO" id="GO:0001664">
    <property type="term" value="F:G protein-coupled receptor binding"/>
    <property type="evidence" value="ECO:0000314"/>
    <property type="project" value="MGI"/>
</dbReference>
<dbReference type="GO" id="GO:0005096">
    <property type="term" value="F:GTPase activator activity"/>
    <property type="evidence" value="ECO:0007669"/>
    <property type="project" value="UniProtKB-KW"/>
</dbReference>
<dbReference type="GO" id="GO:0005085">
    <property type="term" value="F:guanyl-nucleotide exchange factor activity"/>
    <property type="evidence" value="ECO:0000318"/>
    <property type="project" value="GO_Central"/>
</dbReference>
<dbReference type="GO" id="GO:0030036">
    <property type="term" value="P:actin cytoskeleton organization"/>
    <property type="evidence" value="ECO:0000303"/>
    <property type="project" value="UniProtKB"/>
</dbReference>
<dbReference type="GO" id="GO:0030010">
    <property type="term" value="P:establishment of cell polarity"/>
    <property type="evidence" value="ECO:0000303"/>
    <property type="project" value="UniProtKB"/>
</dbReference>
<dbReference type="GO" id="GO:0007186">
    <property type="term" value="P:G protein-coupled receptor signaling pathway"/>
    <property type="evidence" value="ECO:0000314"/>
    <property type="project" value="MGI"/>
</dbReference>
<dbReference type="GO" id="GO:0045893">
    <property type="term" value="P:positive regulation of DNA-templated transcription"/>
    <property type="evidence" value="ECO:0000314"/>
    <property type="project" value="UniProtKB"/>
</dbReference>
<dbReference type="GO" id="GO:0001558">
    <property type="term" value="P:regulation of cell growth"/>
    <property type="evidence" value="ECO:0000303"/>
    <property type="project" value="UniProtKB"/>
</dbReference>
<dbReference type="GO" id="GO:0051056">
    <property type="term" value="P:regulation of small GTPase mediated signal transduction"/>
    <property type="evidence" value="ECO:0000304"/>
    <property type="project" value="Reactome"/>
</dbReference>
<dbReference type="GO" id="GO:0007266">
    <property type="term" value="P:Rho protein signal transduction"/>
    <property type="evidence" value="ECO:0000314"/>
    <property type="project" value="UniProtKB"/>
</dbReference>
<dbReference type="GO" id="GO:0006941">
    <property type="term" value="P:striated muscle contraction"/>
    <property type="evidence" value="ECO:0000303"/>
    <property type="project" value="UniProtKB"/>
</dbReference>
<dbReference type="CDD" id="cd23069">
    <property type="entry name" value="PDZ_ARHGEF11-12-like"/>
    <property type="match status" value="1"/>
</dbReference>
<dbReference type="CDD" id="cd13391">
    <property type="entry name" value="PH_PRG"/>
    <property type="match status" value="1"/>
</dbReference>
<dbReference type="CDD" id="cd08753">
    <property type="entry name" value="RGS_PDZRhoGEF"/>
    <property type="match status" value="1"/>
</dbReference>
<dbReference type="CDD" id="cd00160">
    <property type="entry name" value="RhoGEF"/>
    <property type="match status" value="1"/>
</dbReference>
<dbReference type="FunFam" id="1.10.167.10:FF:000010">
    <property type="entry name" value="Rho guanine nucleotide exchange factor (GEF) 11"/>
    <property type="match status" value="1"/>
</dbReference>
<dbReference type="FunFam" id="1.20.900.10:FF:000006">
    <property type="entry name" value="Rho guanine nucleotide exchange factor (GEF) 11"/>
    <property type="match status" value="1"/>
</dbReference>
<dbReference type="FunFam" id="2.30.42.10:FF:000033">
    <property type="entry name" value="Rho guanine nucleotide exchange factor (GEF) 11"/>
    <property type="match status" value="1"/>
</dbReference>
<dbReference type="FunFam" id="2.30.29.30:FF:000072">
    <property type="entry name" value="Rho guanine nucleotide exchange factor 1"/>
    <property type="match status" value="1"/>
</dbReference>
<dbReference type="Gene3D" id="2.30.42.10">
    <property type="match status" value="1"/>
</dbReference>
<dbReference type="Gene3D" id="1.20.900.10">
    <property type="entry name" value="Dbl homology (DH) domain"/>
    <property type="match status" value="1"/>
</dbReference>
<dbReference type="Gene3D" id="2.30.29.30">
    <property type="entry name" value="Pleckstrin-homology domain (PH domain)/Phosphotyrosine-binding domain (PTB)"/>
    <property type="match status" value="1"/>
</dbReference>
<dbReference type="Gene3D" id="1.10.167.10">
    <property type="entry name" value="Regulator of G-protein Signalling 4, domain 2"/>
    <property type="match status" value="1"/>
</dbReference>
<dbReference type="InterPro" id="IPR035899">
    <property type="entry name" value="DBL_dom_sf"/>
</dbReference>
<dbReference type="InterPro" id="IPR000219">
    <property type="entry name" value="DH_dom"/>
</dbReference>
<dbReference type="InterPro" id="IPR001478">
    <property type="entry name" value="PDZ"/>
</dbReference>
<dbReference type="InterPro" id="IPR036034">
    <property type="entry name" value="PDZ_sf"/>
</dbReference>
<dbReference type="InterPro" id="IPR037889">
    <property type="entry name" value="PDZRhoGEF_RGS"/>
</dbReference>
<dbReference type="InterPro" id="IPR011993">
    <property type="entry name" value="PH-like_dom_sf"/>
</dbReference>
<dbReference type="InterPro" id="IPR041020">
    <property type="entry name" value="PH_16"/>
</dbReference>
<dbReference type="InterPro" id="IPR001849">
    <property type="entry name" value="PH_domain"/>
</dbReference>
<dbReference type="InterPro" id="IPR037803">
    <property type="entry name" value="PRG_PH"/>
</dbReference>
<dbReference type="InterPro" id="IPR016137">
    <property type="entry name" value="RGS"/>
</dbReference>
<dbReference type="InterPro" id="IPR015212">
    <property type="entry name" value="RGS-like_dom"/>
</dbReference>
<dbReference type="InterPro" id="IPR036305">
    <property type="entry name" value="RGS_sf"/>
</dbReference>
<dbReference type="InterPro" id="IPR044926">
    <property type="entry name" value="RGS_subdomain_2"/>
</dbReference>
<dbReference type="PANTHER" id="PTHR45872:SF1">
    <property type="entry name" value="RHO GUANINE NUCLEOTIDE EXCHANGE FACTOR 11"/>
    <property type="match status" value="1"/>
</dbReference>
<dbReference type="PANTHER" id="PTHR45872">
    <property type="entry name" value="RHO GUANINE NUCLEOTIDE EXCHANGE FACTOR 2, ISOFORM D"/>
    <property type="match status" value="1"/>
</dbReference>
<dbReference type="Pfam" id="PF00595">
    <property type="entry name" value="PDZ"/>
    <property type="match status" value="1"/>
</dbReference>
<dbReference type="Pfam" id="PF17838">
    <property type="entry name" value="PH_16"/>
    <property type="match status" value="1"/>
</dbReference>
<dbReference type="Pfam" id="PF09128">
    <property type="entry name" value="RGS-like"/>
    <property type="match status" value="1"/>
</dbReference>
<dbReference type="Pfam" id="PF00621">
    <property type="entry name" value="RhoGEF"/>
    <property type="match status" value="1"/>
</dbReference>
<dbReference type="SMART" id="SM00228">
    <property type="entry name" value="PDZ"/>
    <property type="match status" value="1"/>
</dbReference>
<dbReference type="SMART" id="SM00233">
    <property type="entry name" value="PH"/>
    <property type="match status" value="1"/>
</dbReference>
<dbReference type="SMART" id="SM00315">
    <property type="entry name" value="RGS"/>
    <property type="match status" value="1"/>
</dbReference>
<dbReference type="SMART" id="SM00325">
    <property type="entry name" value="RhoGEF"/>
    <property type="match status" value="1"/>
</dbReference>
<dbReference type="SUPFAM" id="SSF48065">
    <property type="entry name" value="DBL homology domain (DH-domain)"/>
    <property type="match status" value="1"/>
</dbReference>
<dbReference type="SUPFAM" id="SSF50156">
    <property type="entry name" value="PDZ domain-like"/>
    <property type="match status" value="1"/>
</dbReference>
<dbReference type="SUPFAM" id="SSF50729">
    <property type="entry name" value="PH domain-like"/>
    <property type="match status" value="1"/>
</dbReference>
<dbReference type="SUPFAM" id="SSF48097">
    <property type="entry name" value="Regulator of G-protein signaling, RGS"/>
    <property type="match status" value="1"/>
</dbReference>
<dbReference type="PROSITE" id="PS50010">
    <property type="entry name" value="DH_2"/>
    <property type="match status" value="1"/>
</dbReference>
<dbReference type="PROSITE" id="PS50106">
    <property type="entry name" value="PDZ"/>
    <property type="match status" value="1"/>
</dbReference>
<dbReference type="PROSITE" id="PS50003">
    <property type="entry name" value="PH_DOMAIN"/>
    <property type="match status" value="1"/>
</dbReference>
<dbReference type="PROSITE" id="PS50132">
    <property type="entry name" value="RGS"/>
    <property type="match status" value="1"/>
</dbReference>
<accession>O15085</accession>
<accession>D3DVD0</accession>
<accession>Q5VY40</accession>
<accession>Q6PFW2</accession>
<comment type="function">
    <text evidence="15">May play a role in the regulation of RhoA GTPase by guanine nucleotide-binding alpha-12 (GNA12) and alpha-13 (GNA13). Acts as guanine nucleotide exchange factor (GEF) for RhoA GTPase and may act as GTPase-activating protein (GAP) for GNA12 and GNA13. Involved in neurotrophin-induced neurite outgrowth.</text>
</comment>
<comment type="subunit">
    <text evidence="1 9 10 12 13 14 16">Interacts with GNA12 and GNA13 through the RGS domain. Interacts with RHOA, PLXNB1 and PLXNB2. Interacts with SLC1A6 (By similarity). Interacts (via DH domain) with GCSAM (via C-terminus). Found in a complex with ARHGEF11 and ARHGEF12; binding to ARHGEF11 and ARHGEF12 enhances CDC42 GEF activity of PLEKHG4B, and PLEKHG4B, in turn, inhibits ARHGEF11- and ARHGEF12-mediated RHOA activation (PubMed:32203420).</text>
</comment>
<comment type="interaction">
    <interactant intactId="EBI-311099">
        <id>O15085</id>
    </interactant>
    <interactant intactId="EBI-886">
        <id>P46108</id>
        <label>CRK</label>
    </interactant>
    <organismsDiffer>false</organismsDiffer>
    <experiments>2</experiments>
</comment>
<comment type="interaction">
    <interactant intactId="EBI-311099">
        <id>O15085</id>
    </interactant>
    <interactant intactId="EBI-389883">
        <id>P16333</id>
        <label>NCK1</label>
    </interactant>
    <organismsDiffer>false</organismsDiffer>
    <experiments>3</experiments>
</comment>
<comment type="interaction">
    <interactant intactId="EBI-311099">
        <id>O15085</id>
    </interactant>
    <interactant intactId="EBI-446668">
        <id>P61586</id>
        <label>RHOA</label>
    </interactant>
    <organismsDiffer>false</organismsDiffer>
    <experiments>12</experiments>
</comment>
<comment type="interaction">
    <interactant intactId="EBI-311099">
        <id>O15085</id>
    </interactant>
    <interactant intactId="EBI-7864788">
        <id>Q7DB74</id>
        <label>espH</label>
    </interactant>
    <organismsDiffer>true</organismsDiffer>
    <experiments>4</experiments>
</comment>
<comment type="interaction">
    <interactant intactId="EBI-25399484">
        <id>O15085-1</id>
    </interactant>
    <interactant intactId="EBI-11741362">
        <id>Q96PX9</id>
        <label>PLEKHG4B</label>
    </interactant>
    <organismsDiffer>false</organismsDiffer>
    <experiments>3</experiments>
</comment>
<comment type="interaction">
    <interactant intactId="EBI-6169263">
        <id>O15085-2</id>
    </interactant>
    <interactant intactId="EBI-772938">
        <id>Q8BPM0</id>
        <label>Daam1</label>
    </interactant>
    <organismsDiffer>true</organismsDiffer>
    <experiments>3</experiments>
</comment>
<comment type="subcellular location">
    <subcellularLocation>
        <location evidence="11">Cytoplasm</location>
    </subcellularLocation>
    <subcellularLocation>
        <location evidence="11">Membrane</location>
    </subcellularLocation>
    <text>Translocated to the membrane upon stimulation.</text>
</comment>
<comment type="alternative products">
    <event type="alternative splicing"/>
    <isoform>
        <id>O15085-1</id>
        <name>1</name>
        <sequence type="displayed"/>
    </isoform>
    <isoform>
        <id>O15085-2</id>
        <name>2</name>
        <sequence type="described" ref="VSP_042003"/>
    </isoform>
</comment>
<comment type="tissue specificity">
    <text evidence="9">Ubiquitously expressed.</text>
</comment>
<comment type="domain">
    <text>The poly-Pro region is essential for plasma membrane localization upon stimulation.</text>
</comment>
<comment type="PTM">
    <text>Phosphorylated by MAP kinase p38 (MAPK11, MAPK12, MAPK13 and/or MAPK14).</text>
</comment>
<comment type="PTM">
    <text evidence="15">Ubiquitinated by the BCR(KLHL20) E3 ubiquitin ligase complex when previously phosphorylated by MAP kinase p38 (MAPK11, MAPK12, MAPK13 and/or MAPK14), leading to its degradation, thereby restricting RhoA activity and facilitating growth cone spreading and neurite outgrowth.</text>
</comment>
<comment type="sequence caution" evidence="19">
    <conflict type="erroneous initiation">
        <sequence resource="EMBL-CDS" id="BAA20834"/>
    </conflict>
</comment>